<organism>
    <name type="scientific">Encephalitozoon cuniculi (strain GB-M1)</name>
    <name type="common">Microsporidian parasite</name>
    <dbReference type="NCBI Taxonomy" id="284813"/>
    <lineage>
        <taxon>Eukaryota</taxon>
        <taxon>Fungi</taxon>
        <taxon>Fungi incertae sedis</taxon>
        <taxon>Microsporidia</taxon>
        <taxon>Unikaryonidae</taxon>
        <taxon>Encephalitozoon</taxon>
    </lineage>
</organism>
<protein>
    <recommendedName>
        <fullName>Uncharacterized membrane protein ECU05_0140</fullName>
    </recommendedName>
</protein>
<dbReference type="EMBL" id="AL590445">
    <property type="protein sequence ID" value="CAD26531.2"/>
    <property type="molecule type" value="Genomic_DNA"/>
</dbReference>
<dbReference type="RefSeq" id="NP_597354.2">
    <property type="nucleotide sequence ID" value="NM_001041220.2"/>
</dbReference>
<dbReference type="GeneID" id="859018"/>
<dbReference type="KEGG" id="ecu:ECU05_0140"/>
<dbReference type="VEuPathDB" id="MicrosporidiaDB:ECU05_0140"/>
<dbReference type="HOGENOM" id="CLU_860597_0_0_1"/>
<dbReference type="InParanoid" id="Q8SVN2"/>
<dbReference type="OrthoDB" id="2195291at2759"/>
<dbReference type="Proteomes" id="UP000000819">
    <property type="component" value="Chromosome V"/>
</dbReference>
<dbReference type="GO" id="GO:0016020">
    <property type="term" value="C:membrane"/>
    <property type="evidence" value="ECO:0007669"/>
    <property type="project" value="UniProtKB-SubCell"/>
</dbReference>
<accession>Q8SVN2</accession>
<keyword id="KW-0175">Coiled coil</keyword>
<keyword id="KW-0472">Membrane</keyword>
<keyword id="KW-1185">Reference proteome</keyword>
<keyword id="KW-0812">Transmembrane</keyword>
<keyword id="KW-1133">Transmembrane helix</keyword>
<reference key="1">
    <citation type="journal article" date="2001" name="Nature">
        <title>Genome sequence and gene compaction of the eukaryote parasite Encephalitozoon cuniculi.</title>
        <authorList>
            <person name="Katinka M.D."/>
            <person name="Duprat S."/>
            <person name="Cornillot E."/>
            <person name="Metenier G."/>
            <person name="Thomarat F."/>
            <person name="Prensier G."/>
            <person name="Barbe V."/>
            <person name="Peyretaillade E."/>
            <person name="Brottier P."/>
            <person name="Wincker P."/>
            <person name="Delbac F."/>
            <person name="El Alaoui H."/>
            <person name="Peyret P."/>
            <person name="Saurin W."/>
            <person name="Gouy M."/>
            <person name="Weissenbach J."/>
            <person name="Vivares C.P."/>
        </authorList>
    </citation>
    <scope>NUCLEOTIDE SEQUENCE [LARGE SCALE GENOMIC DNA]</scope>
    <source>
        <strain>GB-M1</strain>
    </source>
</reference>
<reference key="2">
    <citation type="journal article" date="2009" name="BMC Genomics">
        <title>Identification of transcriptional signals in Encephalitozoon cuniculi widespread among Microsporidia phylum: support for accurate structural genome annotation.</title>
        <authorList>
            <person name="Peyretaillade E."/>
            <person name="Goncalves O."/>
            <person name="Terrat S."/>
            <person name="Dugat-Bony E."/>
            <person name="Wincker P."/>
            <person name="Cornman R.S."/>
            <person name="Evans J.D."/>
            <person name="Delbac F."/>
            <person name="Peyret P."/>
        </authorList>
    </citation>
    <scope>GENOME REANNOTATION</scope>
    <source>
        <strain>GB-M1</strain>
    </source>
</reference>
<reference key="3">
    <citation type="journal article" date="2006" name="Proteomics">
        <title>Proteomic analysis of the eukaryotic parasite Encephalitozoon cuniculi (microsporidia): a reference map for proteins expressed in late sporogonial stages.</title>
        <authorList>
            <person name="Brosson D."/>
            <person name="Kuhn L."/>
            <person name="Delbac F."/>
            <person name="Garin J."/>
            <person name="Vivares C.P."/>
            <person name="Texier C."/>
        </authorList>
    </citation>
    <scope>IDENTIFICATION BY MASS SPECTROMETRY [LARGE SCALE ANALYSIS]</scope>
    <scope>DEVELOPMENTAL STAGE</scope>
</reference>
<sequence>MSIMKSKIAKTLVVVVVAIAIFTLVLLMLWEGPLGTLTEENLTELNGEVPFRFKDSGSNEEGKDVTLSKFFVCLNKVLRSADDSLSSYLCCGETSEEEGESKKGKYVKNAITEARNMMFRVKDSKDVILEILKKGDKNRNELAETVSNAFSAVETSEGSDQESEGADEQGKIEKLNTALAELYIWIWLKGIPEEDKRTLQFRKTYKENQSVKNLLDGLDEENREVAESTILVKVGKKEDSMHVIEHILTSIFQANGYMEKGSIKQAYLSAKASVAAAGGSLGKKVSEVSDNEGKGLIDSLFGMIGWRNNSNNNSSVSKKKEEQGVNS</sequence>
<proteinExistence type="evidence at protein level"/>
<feature type="chain" id="PRO_0000382770" description="Uncharacterized membrane protein ECU05_0140">
    <location>
        <begin position="1"/>
        <end position="327"/>
    </location>
</feature>
<feature type="transmembrane region" description="Helical" evidence="1">
    <location>
        <begin position="12"/>
        <end position="32"/>
    </location>
</feature>
<feature type="region of interest" description="Disordered" evidence="2">
    <location>
        <begin position="149"/>
        <end position="170"/>
    </location>
</feature>
<feature type="coiled-coil region" evidence="1">
    <location>
        <begin position="162"/>
        <end position="227"/>
    </location>
</feature>
<feature type="compositionally biased region" description="Acidic residues" evidence="2">
    <location>
        <begin position="157"/>
        <end position="167"/>
    </location>
</feature>
<gene>
    <name type="ordered locus">ECU05_0140</name>
</gene>
<comment type="subcellular location">
    <subcellularLocation>
        <location evidence="4">Membrane</location>
        <topology evidence="4">Single-pass membrane protein</topology>
    </subcellularLocation>
</comment>
<comment type="developmental stage">
    <text evidence="3">Expressed in late sporogonial stages.</text>
</comment>
<evidence type="ECO:0000255" key="1"/>
<evidence type="ECO:0000256" key="2">
    <source>
        <dbReference type="SAM" id="MobiDB-lite"/>
    </source>
</evidence>
<evidence type="ECO:0000269" key="3">
    <source>
    </source>
</evidence>
<evidence type="ECO:0000305" key="4"/>
<name>Y514_ENCCU</name>